<organism>
    <name type="scientific">Solanum tuberosum</name>
    <name type="common">Potato</name>
    <dbReference type="NCBI Taxonomy" id="4113"/>
    <lineage>
        <taxon>Eukaryota</taxon>
        <taxon>Viridiplantae</taxon>
        <taxon>Streptophyta</taxon>
        <taxon>Embryophyta</taxon>
        <taxon>Tracheophyta</taxon>
        <taxon>Spermatophyta</taxon>
        <taxon>Magnoliopsida</taxon>
        <taxon>eudicotyledons</taxon>
        <taxon>Gunneridae</taxon>
        <taxon>Pentapetalae</taxon>
        <taxon>asterids</taxon>
        <taxon>lamiids</taxon>
        <taxon>Solanales</taxon>
        <taxon>Solanaceae</taxon>
        <taxon>Solanoideae</taxon>
        <taxon>Solaneae</taxon>
        <taxon>Solanum</taxon>
    </lineage>
</organism>
<name>RK2_SOLTU</name>
<sequence length="274" mass="30049">MAIHLYKTSTPSTRNGTVDSQVKSNPRNNLIYGQRRCGKGRNARGIITARHRGGGHKRLYRKIDFRRNEKDIYGRIVTIEYDPNRNAYICLIHYGDGEKRYILHPRGAIIGDTIVSGTEVPIKMGNALPLTDMPLGTAIHNIEITLGKGGQLARAAGAVAKLIAKEGKSATLKLPSGEVRLISKNCSATVGQVGNVGVNQKSLGRAGSKRWLGKRPVVRGVVMNPVDHPHGGGEGRAPIGRKKPTTPWGYPALGRRSRKRNKYSDNLILRRRSK</sequence>
<proteinExistence type="inferred from homology"/>
<reference key="1">
    <citation type="journal article" date="2006" name="Plant Cell Rep.">
        <title>The complete chloroplast genome sequences of Solanum tuberosum and comparative analysis with Solanaceae species identified the presence of a 241-bp deletion in cultivated potato chloroplast DNA sequence.</title>
        <authorList>
            <person name="Chung H.-J."/>
            <person name="Jung J.D."/>
            <person name="Park H.-W."/>
            <person name="Kim J.-H."/>
            <person name="Cha H.W."/>
            <person name="Min S.R."/>
            <person name="Jeong W.-J."/>
            <person name="Liu J.R."/>
        </authorList>
    </citation>
    <scope>NUCLEOTIDE SEQUENCE [LARGE SCALE GENOMIC DNA]</scope>
    <source>
        <strain>cv. Desiree</strain>
    </source>
</reference>
<reference key="2">
    <citation type="submission" date="2006-02" db="EMBL/GenBank/DDBJ databases">
        <title>Complete chloroplast genome sequences of Solanum tuberosum cultivar Desiree and comparative analyses with other Solanaceae genomes.</title>
        <authorList>
            <person name="Gargano D."/>
            <person name="Scotti N."/>
            <person name="Vezzi A."/>
            <person name="Bilardi A."/>
            <person name="Valle G."/>
            <person name="Grillo S."/>
            <person name="Cardi T."/>
        </authorList>
    </citation>
    <scope>NUCLEOTIDE SEQUENCE [LARGE SCALE GENOMIC DNA]</scope>
    <source>
        <strain>cv. Desiree</strain>
    </source>
</reference>
<accession>Q2VEB7</accession>
<dbReference type="EMBL" id="DQ231562">
    <property type="protein sequence ID" value="ABB90079.1"/>
    <property type="molecule type" value="Genomic_DNA"/>
</dbReference>
<dbReference type="EMBL" id="DQ231562">
    <property type="protein sequence ID" value="ABB90101.1"/>
    <property type="molecule type" value="Genomic_DNA"/>
</dbReference>
<dbReference type="EMBL" id="DQ386163">
    <property type="protein sequence ID" value="ABD47097.1"/>
    <property type="molecule type" value="Genomic_DNA"/>
</dbReference>
<dbReference type="EMBL" id="DQ386163">
    <property type="protein sequence ID" value="ABD47121.1"/>
    <property type="molecule type" value="Genomic_DNA"/>
</dbReference>
<dbReference type="SMR" id="Q2VEB7"/>
<dbReference type="FunCoup" id="Q2VEB7">
    <property type="interactions" value="762"/>
</dbReference>
<dbReference type="STRING" id="4113.Q2VEB7"/>
<dbReference type="KEGG" id="sot:4099885"/>
<dbReference type="KEGG" id="sot:4099928"/>
<dbReference type="InParanoid" id="Q2VEB7"/>
<dbReference type="OrthoDB" id="1868197at2759"/>
<dbReference type="Proteomes" id="UP000011115">
    <property type="component" value="Unassembled WGS sequence"/>
</dbReference>
<dbReference type="ExpressionAtlas" id="Q2VEB7">
    <property type="expression patterns" value="baseline and differential"/>
</dbReference>
<dbReference type="GO" id="GO:0009507">
    <property type="term" value="C:chloroplast"/>
    <property type="evidence" value="ECO:0007669"/>
    <property type="project" value="UniProtKB-SubCell"/>
</dbReference>
<dbReference type="GO" id="GO:0005762">
    <property type="term" value="C:mitochondrial large ribosomal subunit"/>
    <property type="evidence" value="ECO:0000318"/>
    <property type="project" value="GO_Central"/>
</dbReference>
<dbReference type="GO" id="GO:0003723">
    <property type="term" value="F:RNA binding"/>
    <property type="evidence" value="ECO:0000318"/>
    <property type="project" value="GO_Central"/>
</dbReference>
<dbReference type="GO" id="GO:0019843">
    <property type="term" value="F:rRNA binding"/>
    <property type="evidence" value="ECO:0007669"/>
    <property type="project" value="UniProtKB-UniRule"/>
</dbReference>
<dbReference type="GO" id="GO:0003735">
    <property type="term" value="F:structural constituent of ribosome"/>
    <property type="evidence" value="ECO:0000318"/>
    <property type="project" value="GO_Central"/>
</dbReference>
<dbReference type="GO" id="GO:0016740">
    <property type="term" value="F:transferase activity"/>
    <property type="evidence" value="ECO:0007669"/>
    <property type="project" value="InterPro"/>
</dbReference>
<dbReference type="GO" id="GO:0032543">
    <property type="term" value="P:mitochondrial translation"/>
    <property type="evidence" value="ECO:0000318"/>
    <property type="project" value="GO_Central"/>
</dbReference>
<dbReference type="FunFam" id="4.10.950.10:FF:000001">
    <property type="entry name" value="50S ribosomal protein L2"/>
    <property type="match status" value="1"/>
</dbReference>
<dbReference type="FunFam" id="2.30.30.30:FF:000008">
    <property type="entry name" value="50S ribosomal protein L2, chloroplastic"/>
    <property type="match status" value="1"/>
</dbReference>
<dbReference type="FunFam" id="2.40.50.140:FF:000029">
    <property type="entry name" value="50S ribosomal protein L2, chloroplastic"/>
    <property type="match status" value="1"/>
</dbReference>
<dbReference type="Gene3D" id="2.30.30.30">
    <property type="match status" value="1"/>
</dbReference>
<dbReference type="Gene3D" id="2.40.50.140">
    <property type="entry name" value="Nucleic acid-binding proteins"/>
    <property type="match status" value="1"/>
</dbReference>
<dbReference type="Gene3D" id="4.10.950.10">
    <property type="entry name" value="Ribosomal protein L2, domain 3"/>
    <property type="match status" value="1"/>
</dbReference>
<dbReference type="HAMAP" id="MF_01320_B">
    <property type="entry name" value="Ribosomal_uL2_B"/>
    <property type="match status" value="1"/>
</dbReference>
<dbReference type="InterPro" id="IPR012340">
    <property type="entry name" value="NA-bd_OB-fold"/>
</dbReference>
<dbReference type="InterPro" id="IPR014722">
    <property type="entry name" value="Rib_uL2_dom2"/>
</dbReference>
<dbReference type="InterPro" id="IPR002171">
    <property type="entry name" value="Ribosomal_uL2"/>
</dbReference>
<dbReference type="InterPro" id="IPR005880">
    <property type="entry name" value="Ribosomal_uL2_bac/org-type"/>
</dbReference>
<dbReference type="InterPro" id="IPR022669">
    <property type="entry name" value="Ribosomal_uL2_C"/>
</dbReference>
<dbReference type="InterPro" id="IPR022671">
    <property type="entry name" value="Ribosomal_uL2_CS"/>
</dbReference>
<dbReference type="InterPro" id="IPR014726">
    <property type="entry name" value="Ribosomal_uL2_dom3"/>
</dbReference>
<dbReference type="InterPro" id="IPR022666">
    <property type="entry name" value="Ribosomal_uL2_RNA-bd_dom"/>
</dbReference>
<dbReference type="InterPro" id="IPR008991">
    <property type="entry name" value="Translation_prot_SH3-like_sf"/>
</dbReference>
<dbReference type="NCBIfam" id="TIGR01171">
    <property type="entry name" value="rplB_bact"/>
    <property type="match status" value="1"/>
</dbReference>
<dbReference type="PANTHER" id="PTHR13691:SF5">
    <property type="entry name" value="LARGE RIBOSOMAL SUBUNIT PROTEIN UL2M"/>
    <property type="match status" value="1"/>
</dbReference>
<dbReference type="PANTHER" id="PTHR13691">
    <property type="entry name" value="RIBOSOMAL PROTEIN L2"/>
    <property type="match status" value="1"/>
</dbReference>
<dbReference type="Pfam" id="PF00181">
    <property type="entry name" value="Ribosomal_L2"/>
    <property type="match status" value="1"/>
</dbReference>
<dbReference type="Pfam" id="PF03947">
    <property type="entry name" value="Ribosomal_L2_C"/>
    <property type="match status" value="1"/>
</dbReference>
<dbReference type="PIRSF" id="PIRSF002158">
    <property type="entry name" value="Ribosomal_L2"/>
    <property type="match status" value="1"/>
</dbReference>
<dbReference type="SMART" id="SM01383">
    <property type="entry name" value="Ribosomal_L2"/>
    <property type="match status" value="1"/>
</dbReference>
<dbReference type="SMART" id="SM01382">
    <property type="entry name" value="Ribosomal_L2_C"/>
    <property type="match status" value="1"/>
</dbReference>
<dbReference type="SUPFAM" id="SSF50249">
    <property type="entry name" value="Nucleic acid-binding proteins"/>
    <property type="match status" value="1"/>
</dbReference>
<dbReference type="SUPFAM" id="SSF50104">
    <property type="entry name" value="Translation proteins SH3-like domain"/>
    <property type="match status" value="1"/>
</dbReference>
<dbReference type="PROSITE" id="PS00467">
    <property type="entry name" value="RIBOSOMAL_L2"/>
    <property type="match status" value="1"/>
</dbReference>
<geneLocation type="chloroplast"/>
<keyword id="KW-0150">Chloroplast</keyword>
<keyword id="KW-0934">Plastid</keyword>
<keyword id="KW-1185">Reference proteome</keyword>
<keyword id="KW-0687">Ribonucleoprotein</keyword>
<keyword id="KW-0689">Ribosomal protein</keyword>
<gene>
    <name type="primary">rpl2-A</name>
</gene>
<gene>
    <name type="primary">rpl2-B</name>
</gene>
<comment type="subunit">
    <text evidence="1">Part of the 50S ribosomal subunit.</text>
</comment>
<comment type="subcellular location">
    <subcellularLocation>
        <location>Plastid</location>
        <location>Chloroplast</location>
    </subcellularLocation>
</comment>
<comment type="similarity">
    <text evidence="4">Belongs to the universal ribosomal protein uL2 family.</text>
</comment>
<evidence type="ECO:0000250" key="1"/>
<evidence type="ECO:0000255" key="2">
    <source>
        <dbReference type="HAMAP-Rule" id="MF_01320"/>
    </source>
</evidence>
<evidence type="ECO:0000256" key="3">
    <source>
        <dbReference type="SAM" id="MobiDB-lite"/>
    </source>
</evidence>
<evidence type="ECO:0000305" key="4"/>
<feature type="chain" id="PRO_0000237286" description="Large ribosomal subunit protein uL2cz/uL2cy">
    <location>
        <begin position="1"/>
        <end position="274"/>
    </location>
</feature>
<feature type="region of interest" description="Disordered" evidence="3">
    <location>
        <begin position="1"/>
        <end position="25"/>
    </location>
</feature>
<feature type="region of interest" description="Disordered" evidence="3">
    <location>
        <begin position="224"/>
        <end position="274"/>
    </location>
</feature>
<feature type="compositionally biased region" description="Polar residues" evidence="3">
    <location>
        <begin position="7"/>
        <end position="25"/>
    </location>
</feature>
<protein>
    <recommendedName>
        <fullName evidence="2">Large ribosomal subunit protein uL2cz/uL2cy</fullName>
    </recommendedName>
    <alternativeName>
        <fullName evidence="4">50S ribosomal protein L2, chloroplastic</fullName>
    </alternativeName>
</protein>